<dbReference type="EMBL" id="EU090173">
    <property type="protein sequence ID" value="ABW77581.1"/>
    <property type="molecule type" value="mRNA"/>
</dbReference>
<dbReference type="ConoServer" id="2817">
    <property type="toxin name" value="Ca5.2 precursor"/>
</dbReference>
<dbReference type="GO" id="GO:0005576">
    <property type="term" value="C:extracellular region"/>
    <property type="evidence" value="ECO:0007669"/>
    <property type="project" value="UniProtKB-SubCell"/>
</dbReference>
<dbReference type="GO" id="GO:0090729">
    <property type="term" value="F:toxin activity"/>
    <property type="evidence" value="ECO:0007669"/>
    <property type="project" value="UniProtKB-KW"/>
</dbReference>
<dbReference type="InterPro" id="IPR031565">
    <property type="entry name" value="T-conotoxin"/>
</dbReference>
<dbReference type="Pfam" id="PF16981">
    <property type="entry name" value="Chi-conotoxin"/>
    <property type="match status" value="1"/>
</dbReference>
<proteinExistence type="evidence at transcript level"/>
<protein>
    <recommendedName>
        <fullName evidence="3">Conotoxin Ca5.2</fullName>
    </recommendedName>
</protein>
<accession>P0C667</accession>
<accession>B4XT45</accession>
<sequence length="66" mass="7393">MRCVPVFLILLGLIASAPSVDARPQTKDDALASFHDSAKRHLQRLVNARKCCPESPPCCHYFGRRK</sequence>
<comment type="subcellular location">
    <subcellularLocation>
        <location evidence="1">Secreted</location>
    </subcellularLocation>
</comment>
<comment type="tissue specificity">
    <text>Expressed by the venom duct.</text>
</comment>
<comment type="domain">
    <text>The cysteine framework is V (CC-CC).</text>
</comment>
<comment type="PTM">
    <text evidence="4">Contains 2 disulfide bonds that can be either 'C1-C3, C2-C4' or 'C1-C4, C2-C3', since these disulfide connectivities have been observed for conotoxins with cysteine framework V (for examples, see AC P0DQQ7 and AC P81755).</text>
</comment>
<comment type="similarity">
    <text evidence="4">Belongs to the conotoxin T superfamily.</text>
</comment>
<evidence type="ECO:0000250" key="1"/>
<evidence type="ECO:0000255" key="2"/>
<evidence type="ECO:0000303" key="3">
    <source>
    </source>
</evidence>
<evidence type="ECO:0000305" key="4"/>
<name>CT52_CONCB</name>
<organism>
    <name type="scientific">Conus caracteristicus</name>
    <name type="common">Characteristic cone</name>
    <dbReference type="NCBI Taxonomy" id="89440"/>
    <lineage>
        <taxon>Eukaryota</taxon>
        <taxon>Metazoa</taxon>
        <taxon>Spiralia</taxon>
        <taxon>Lophotrochozoa</taxon>
        <taxon>Mollusca</taxon>
        <taxon>Gastropoda</taxon>
        <taxon>Caenogastropoda</taxon>
        <taxon>Neogastropoda</taxon>
        <taxon>Conoidea</taxon>
        <taxon>Conidae</taxon>
        <taxon>Conus</taxon>
    </lineage>
</organism>
<reference key="1">
    <citation type="journal article" date="2007" name="Peptides">
        <title>Identification of six novel T-1 conotoxins from Conus pulicarius by molecular cloning.</title>
        <authorList>
            <person name="Peng C."/>
            <person name="Wu X."/>
            <person name="Han Y."/>
            <person name="Yuan D."/>
            <person name="Chi C."/>
            <person name="Wang C."/>
        </authorList>
    </citation>
    <scope>NUCLEOTIDE SEQUENCE [MRNA]</scope>
    <source>
        <tissue>Venom duct</tissue>
    </source>
</reference>
<keyword id="KW-0027">Amidation</keyword>
<keyword id="KW-0165">Cleavage on pair of basic residues</keyword>
<keyword id="KW-1015">Disulfide bond</keyword>
<keyword id="KW-0964">Secreted</keyword>
<keyword id="KW-0732">Signal</keyword>
<keyword id="KW-0800">Toxin</keyword>
<feature type="signal peptide" evidence="2">
    <location>
        <begin position="1"/>
        <end position="22"/>
    </location>
</feature>
<feature type="propeptide" id="PRO_0000316907" evidence="1">
    <location>
        <begin position="23"/>
        <end position="48"/>
    </location>
</feature>
<feature type="peptide" id="PRO_0000316908" description="Conotoxin Ca5.2">
    <location>
        <begin position="51"/>
        <end position="62"/>
    </location>
</feature>
<feature type="modified residue" description="Phenylalanine amide" evidence="1">
    <location>
        <position position="62"/>
    </location>
</feature>